<sequence length="425" mass="47755">MLDIKWIRENPEKLDEALASRGIEPHAERLIALDLERRSHVVEVQCAQERRNSASKEIRQALAAGDQKTVERIKAEVEEIKTFLSSAAIKEKRLTESLEKILSAIPNIPLDSVPKGENEEANIVIRHFGTPPTFNFIPKEHFDLGQNLKQMNFERASRLSGARFTVLSGALARLERALGQFMLDVHVNEHGYEEISLPLLVRDEIVYGAAQLPKFSDDLFRTTDGRWLISTAEVPLVNLVNGEVLHESDLPLRFSSLTPCFRSEAGAAGRDTRGMLRQHQFWKVEMVSITTEEQSLIELERMTECAEDVLKRLELPFRTVVLSTGDMGFASCKTYDIEVWLPGQGCYREISSCSVCGDFQGRRMNARYRKDGDKTLHFVHSLNGSGTAIGRCLIAILENYQQADGSIIIPGALQPYMKGISRITA</sequence>
<organism>
    <name type="scientific">Bartonella bacilliformis (strain ATCC 35685 / KC583 / Herrer 020/F12,63)</name>
    <dbReference type="NCBI Taxonomy" id="360095"/>
    <lineage>
        <taxon>Bacteria</taxon>
        <taxon>Pseudomonadati</taxon>
        <taxon>Pseudomonadota</taxon>
        <taxon>Alphaproteobacteria</taxon>
        <taxon>Hyphomicrobiales</taxon>
        <taxon>Bartonellaceae</taxon>
        <taxon>Bartonella</taxon>
    </lineage>
</organism>
<reference key="1">
    <citation type="submission" date="2006-12" db="EMBL/GenBank/DDBJ databases">
        <authorList>
            <person name="Hendrix L."/>
            <person name="Mohamoud Y."/>
            <person name="Radune D."/>
            <person name="Shvartsbeyn A."/>
            <person name="Daugherty S."/>
            <person name="Dodson R."/>
            <person name="Durkin A.S."/>
            <person name="Harkins D."/>
            <person name="Huot H."/>
            <person name="Kothari S.P."/>
            <person name="Madupu R."/>
            <person name="Li J."/>
            <person name="Nelson W.C."/>
            <person name="Shrivastava S."/>
            <person name="Giglio M.G."/>
            <person name="Haft D."/>
            <person name="Selengut J."/>
            <person name="Fraser-Ligget C."/>
            <person name="Seshadri R."/>
        </authorList>
    </citation>
    <scope>NUCLEOTIDE SEQUENCE [LARGE SCALE GENOMIC DNA]</scope>
    <source>
        <strain>ATCC 35685 / KC583 / Herrer 020/F12,63</strain>
    </source>
</reference>
<protein>
    <recommendedName>
        <fullName evidence="1">Serine--tRNA ligase</fullName>
        <ecNumber evidence="1">6.1.1.11</ecNumber>
    </recommendedName>
    <alternativeName>
        <fullName evidence="1">Seryl-tRNA synthetase</fullName>
        <shortName evidence="1">SerRS</shortName>
    </alternativeName>
    <alternativeName>
        <fullName evidence="1">Seryl-tRNA(Ser/Sec) synthetase</fullName>
    </alternativeName>
</protein>
<accession>A1US81</accession>
<comment type="function">
    <text evidence="1">Catalyzes the attachment of serine to tRNA(Ser). Is also able to aminoacylate tRNA(Sec) with serine, to form the misacylated tRNA L-seryl-tRNA(Sec), which will be further converted into selenocysteinyl-tRNA(Sec).</text>
</comment>
<comment type="catalytic activity">
    <reaction evidence="1">
        <text>tRNA(Ser) + L-serine + ATP = L-seryl-tRNA(Ser) + AMP + diphosphate + H(+)</text>
        <dbReference type="Rhea" id="RHEA:12292"/>
        <dbReference type="Rhea" id="RHEA-COMP:9669"/>
        <dbReference type="Rhea" id="RHEA-COMP:9703"/>
        <dbReference type="ChEBI" id="CHEBI:15378"/>
        <dbReference type="ChEBI" id="CHEBI:30616"/>
        <dbReference type="ChEBI" id="CHEBI:33019"/>
        <dbReference type="ChEBI" id="CHEBI:33384"/>
        <dbReference type="ChEBI" id="CHEBI:78442"/>
        <dbReference type="ChEBI" id="CHEBI:78533"/>
        <dbReference type="ChEBI" id="CHEBI:456215"/>
        <dbReference type="EC" id="6.1.1.11"/>
    </reaction>
</comment>
<comment type="catalytic activity">
    <reaction evidence="1">
        <text>tRNA(Sec) + L-serine + ATP = L-seryl-tRNA(Sec) + AMP + diphosphate + H(+)</text>
        <dbReference type="Rhea" id="RHEA:42580"/>
        <dbReference type="Rhea" id="RHEA-COMP:9742"/>
        <dbReference type="Rhea" id="RHEA-COMP:10128"/>
        <dbReference type="ChEBI" id="CHEBI:15378"/>
        <dbReference type="ChEBI" id="CHEBI:30616"/>
        <dbReference type="ChEBI" id="CHEBI:33019"/>
        <dbReference type="ChEBI" id="CHEBI:33384"/>
        <dbReference type="ChEBI" id="CHEBI:78442"/>
        <dbReference type="ChEBI" id="CHEBI:78533"/>
        <dbReference type="ChEBI" id="CHEBI:456215"/>
        <dbReference type="EC" id="6.1.1.11"/>
    </reaction>
</comment>
<comment type="pathway">
    <text evidence="1">Aminoacyl-tRNA biosynthesis; selenocysteinyl-tRNA(Sec) biosynthesis; L-seryl-tRNA(Sec) from L-serine and tRNA(Sec): step 1/1.</text>
</comment>
<comment type="subunit">
    <text evidence="1">Homodimer. The tRNA molecule binds across the dimer.</text>
</comment>
<comment type="subcellular location">
    <subcellularLocation>
        <location evidence="1">Cytoplasm</location>
    </subcellularLocation>
</comment>
<comment type="domain">
    <text evidence="1">Consists of two distinct domains, a catalytic core and a N-terminal extension that is involved in tRNA binding.</text>
</comment>
<comment type="similarity">
    <text evidence="1">Belongs to the class-II aminoacyl-tRNA synthetase family. Type-1 seryl-tRNA synthetase subfamily.</text>
</comment>
<gene>
    <name evidence="1" type="primary">serS</name>
    <name type="ordered locus">BARBAKC583_0519</name>
</gene>
<keyword id="KW-0030">Aminoacyl-tRNA synthetase</keyword>
<keyword id="KW-0067">ATP-binding</keyword>
<keyword id="KW-0963">Cytoplasm</keyword>
<keyword id="KW-0436">Ligase</keyword>
<keyword id="KW-0547">Nucleotide-binding</keyword>
<keyword id="KW-0648">Protein biosynthesis</keyword>
<name>SYS_BARBK</name>
<feature type="chain" id="PRO_1000019617" description="Serine--tRNA ligase">
    <location>
        <begin position="1"/>
        <end position="425"/>
    </location>
</feature>
<feature type="binding site" evidence="1">
    <location>
        <begin position="231"/>
        <end position="233"/>
    </location>
    <ligand>
        <name>L-serine</name>
        <dbReference type="ChEBI" id="CHEBI:33384"/>
    </ligand>
</feature>
<feature type="binding site" evidence="1">
    <location>
        <begin position="262"/>
        <end position="264"/>
    </location>
    <ligand>
        <name>ATP</name>
        <dbReference type="ChEBI" id="CHEBI:30616"/>
    </ligand>
</feature>
<feature type="binding site" evidence="1">
    <location>
        <position position="285"/>
    </location>
    <ligand>
        <name>L-serine</name>
        <dbReference type="ChEBI" id="CHEBI:33384"/>
    </ligand>
</feature>
<feature type="binding site" evidence="1">
    <location>
        <begin position="349"/>
        <end position="352"/>
    </location>
    <ligand>
        <name>ATP</name>
        <dbReference type="ChEBI" id="CHEBI:30616"/>
    </ligand>
</feature>
<feature type="binding site" evidence="1">
    <location>
        <position position="385"/>
    </location>
    <ligand>
        <name>L-serine</name>
        <dbReference type="ChEBI" id="CHEBI:33384"/>
    </ligand>
</feature>
<dbReference type="EC" id="6.1.1.11" evidence="1"/>
<dbReference type="EMBL" id="CP000524">
    <property type="protein sequence ID" value="ABM44691.1"/>
    <property type="molecule type" value="Genomic_DNA"/>
</dbReference>
<dbReference type="RefSeq" id="WP_005766632.1">
    <property type="nucleotide sequence ID" value="NC_008783.1"/>
</dbReference>
<dbReference type="SMR" id="A1US81"/>
<dbReference type="STRING" id="360095.BARBAKC583_0519"/>
<dbReference type="GeneID" id="4684779"/>
<dbReference type="KEGG" id="bbk:BARBAKC583_0519"/>
<dbReference type="PATRIC" id="fig|360095.6.peg.503"/>
<dbReference type="eggNOG" id="COG0172">
    <property type="taxonomic scope" value="Bacteria"/>
</dbReference>
<dbReference type="HOGENOM" id="CLU_023797_1_1_5"/>
<dbReference type="OrthoDB" id="9804647at2"/>
<dbReference type="UniPathway" id="UPA00906">
    <property type="reaction ID" value="UER00895"/>
</dbReference>
<dbReference type="Proteomes" id="UP000000643">
    <property type="component" value="Chromosome"/>
</dbReference>
<dbReference type="GO" id="GO:0005737">
    <property type="term" value="C:cytoplasm"/>
    <property type="evidence" value="ECO:0007669"/>
    <property type="project" value="UniProtKB-SubCell"/>
</dbReference>
<dbReference type="GO" id="GO:0005524">
    <property type="term" value="F:ATP binding"/>
    <property type="evidence" value="ECO:0007669"/>
    <property type="project" value="UniProtKB-UniRule"/>
</dbReference>
<dbReference type="GO" id="GO:0004828">
    <property type="term" value="F:serine-tRNA ligase activity"/>
    <property type="evidence" value="ECO:0007669"/>
    <property type="project" value="UniProtKB-UniRule"/>
</dbReference>
<dbReference type="GO" id="GO:0016260">
    <property type="term" value="P:selenocysteine biosynthetic process"/>
    <property type="evidence" value="ECO:0007669"/>
    <property type="project" value="UniProtKB-UniRule"/>
</dbReference>
<dbReference type="GO" id="GO:0006434">
    <property type="term" value="P:seryl-tRNA aminoacylation"/>
    <property type="evidence" value="ECO:0007669"/>
    <property type="project" value="UniProtKB-UniRule"/>
</dbReference>
<dbReference type="CDD" id="cd00770">
    <property type="entry name" value="SerRS_core"/>
    <property type="match status" value="1"/>
</dbReference>
<dbReference type="Gene3D" id="3.30.930.10">
    <property type="entry name" value="Bira Bifunctional Protein, Domain 2"/>
    <property type="match status" value="1"/>
</dbReference>
<dbReference type="Gene3D" id="1.10.287.40">
    <property type="entry name" value="Serine-tRNA synthetase, tRNA binding domain"/>
    <property type="match status" value="1"/>
</dbReference>
<dbReference type="HAMAP" id="MF_00176">
    <property type="entry name" value="Ser_tRNA_synth_type1"/>
    <property type="match status" value="1"/>
</dbReference>
<dbReference type="InterPro" id="IPR002314">
    <property type="entry name" value="aa-tRNA-synt_IIb"/>
</dbReference>
<dbReference type="InterPro" id="IPR006195">
    <property type="entry name" value="aa-tRNA-synth_II"/>
</dbReference>
<dbReference type="InterPro" id="IPR045864">
    <property type="entry name" value="aa-tRNA-synth_II/BPL/LPL"/>
</dbReference>
<dbReference type="InterPro" id="IPR002317">
    <property type="entry name" value="Ser-tRNA-ligase_type_1"/>
</dbReference>
<dbReference type="InterPro" id="IPR015866">
    <property type="entry name" value="Ser-tRNA-synth_1_N"/>
</dbReference>
<dbReference type="InterPro" id="IPR042103">
    <property type="entry name" value="SerRS_1_N_sf"/>
</dbReference>
<dbReference type="InterPro" id="IPR033729">
    <property type="entry name" value="SerRS_core"/>
</dbReference>
<dbReference type="InterPro" id="IPR010978">
    <property type="entry name" value="tRNA-bd_arm"/>
</dbReference>
<dbReference type="NCBIfam" id="TIGR00414">
    <property type="entry name" value="serS"/>
    <property type="match status" value="1"/>
</dbReference>
<dbReference type="PANTHER" id="PTHR43697:SF1">
    <property type="entry name" value="SERINE--TRNA LIGASE"/>
    <property type="match status" value="1"/>
</dbReference>
<dbReference type="PANTHER" id="PTHR43697">
    <property type="entry name" value="SERYL-TRNA SYNTHETASE"/>
    <property type="match status" value="1"/>
</dbReference>
<dbReference type="Pfam" id="PF02403">
    <property type="entry name" value="Seryl_tRNA_N"/>
    <property type="match status" value="1"/>
</dbReference>
<dbReference type="Pfam" id="PF00587">
    <property type="entry name" value="tRNA-synt_2b"/>
    <property type="match status" value="1"/>
</dbReference>
<dbReference type="PIRSF" id="PIRSF001529">
    <property type="entry name" value="Ser-tRNA-synth_IIa"/>
    <property type="match status" value="1"/>
</dbReference>
<dbReference type="PRINTS" id="PR00981">
    <property type="entry name" value="TRNASYNTHSER"/>
</dbReference>
<dbReference type="SUPFAM" id="SSF55681">
    <property type="entry name" value="Class II aaRS and biotin synthetases"/>
    <property type="match status" value="1"/>
</dbReference>
<dbReference type="SUPFAM" id="SSF46589">
    <property type="entry name" value="tRNA-binding arm"/>
    <property type="match status" value="1"/>
</dbReference>
<dbReference type="PROSITE" id="PS50862">
    <property type="entry name" value="AA_TRNA_LIGASE_II"/>
    <property type="match status" value="1"/>
</dbReference>
<proteinExistence type="inferred from homology"/>
<evidence type="ECO:0000255" key="1">
    <source>
        <dbReference type="HAMAP-Rule" id="MF_00176"/>
    </source>
</evidence>